<proteinExistence type="evidence at protein level"/>
<name>ARREH_SHIFL</name>
<dbReference type="EC" id="1.-.-.-" evidence="2"/>
<dbReference type="EMBL" id="AE014073">
    <property type="protein sequence ID" value="AAP17869.1"/>
    <property type="molecule type" value="Genomic_DNA"/>
</dbReference>
<dbReference type="EMBL" id="ADUV01000006">
    <property type="protein sequence ID" value="EFS15380.1"/>
    <property type="status" value="ALT_INIT"/>
    <property type="molecule type" value="Genomic_DNA"/>
</dbReference>
<dbReference type="RefSeq" id="WP_001239389.1">
    <property type="nucleotide sequence ID" value="NZ_QWTR01000038.1"/>
</dbReference>
<dbReference type="PDB" id="2FZV">
    <property type="method" value="X-ray"/>
    <property type="resolution" value="1.70 A"/>
    <property type="chains" value="A/B/C/D=1-255"/>
</dbReference>
<dbReference type="PDBsum" id="2FZV"/>
<dbReference type="SMR" id="Q7UC03"/>
<dbReference type="GeneID" id="92892026"/>
<dbReference type="KEGG" id="sfx:S2709"/>
<dbReference type="PATRIC" id="fig|198215.9.peg.575"/>
<dbReference type="HOGENOM" id="CLU_055322_0_1_6"/>
<dbReference type="EvolutionaryTrace" id="Q7UC03"/>
<dbReference type="Proteomes" id="UP000002673">
    <property type="component" value="Chromosome"/>
</dbReference>
<dbReference type="GO" id="GO:0050446">
    <property type="term" value="F:azobenzene reductase activity"/>
    <property type="evidence" value="ECO:0000314"/>
    <property type="project" value="UniProtKB"/>
</dbReference>
<dbReference type="GO" id="GO:0010181">
    <property type="term" value="F:FMN binding"/>
    <property type="evidence" value="ECO:0000314"/>
    <property type="project" value="UniProtKB"/>
</dbReference>
<dbReference type="GO" id="GO:0052873">
    <property type="term" value="F:FMN reductase (NADPH) activity"/>
    <property type="evidence" value="ECO:0000314"/>
    <property type="project" value="UniProtKB"/>
</dbReference>
<dbReference type="GO" id="GO:0016655">
    <property type="term" value="F:oxidoreductase activity, acting on NAD(P)H, quinone or similar compound as acceptor"/>
    <property type="evidence" value="ECO:0007669"/>
    <property type="project" value="TreeGrafter"/>
</dbReference>
<dbReference type="GO" id="GO:0051289">
    <property type="term" value="P:protein homotetramerization"/>
    <property type="evidence" value="ECO:0000314"/>
    <property type="project" value="UniProtKB"/>
</dbReference>
<dbReference type="FunFam" id="3.40.50.360:FF:000027">
    <property type="entry name" value="Arsenical resistance protein ArsH"/>
    <property type="match status" value="1"/>
</dbReference>
<dbReference type="Gene3D" id="3.40.50.360">
    <property type="match status" value="1"/>
</dbReference>
<dbReference type="InterPro" id="IPR014063">
    <property type="entry name" value="Arsenate-R_ArsH"/>
</dbReference>
<dbReference type="InterPro" id="IPR029039">
    <property type="entry name" value="Flavoprotein-like_sf"/>
</dbReference>
<dbReference type="InterPro" id="IPR005025">
    <property type="entry name" value="FMN_Rdtase-like_dom"/>
</dbReference>
<dbReference type="NCBIfam" id="TIGR02690">
    <property type="entry name" value="resist_ArsH"/>
    <property type="match status" value="1"/>
</dbReference>
<dbReference type="PANTHER" id="PTHR43590">
    <property type="entry name" value="ARSENIC RESISTANCE PROTEIN ARSH (AFU_ORTHOLOGUE AFUA_5G15030)"/>
    <property type="match status" value="1"/>
</dbReference>
<dbReference type="PANTHER" id="PTHR43590:SF1">
    <property type="entry name" value="ARSENIC RESISTANCE PROTEIN ARSH (AFU_ORTHOLOGUE AFUA_5G15030)"/>
    <property type="match status" value="1"/>
</dbReference>
<dbReference type="Pfam" id="PF03358">
    <property type="entry name" value="FMN_red"/>
    <property type="match status" value="1"/>
</dbReference>
<dbReference type="SUPFAM" id="SSF52218">
    <property type="entry name" value="Flavoproteins"/>
    <property type="match status" value="1"/>
</dbReference>
<keyword id="KW-0002">3D-structure</keyword>
<keyword id="KW-0285">Flavoprotein</keyword>
<keyword id="KW-0288">FMN</keyword>
<keyword id="KW-0521">NADP</keyword>
<keyword id="KW-0547">Nucleotide-binding</keyword>
<keyword id="KW-0560">Oxidoreductase</keyword>
<gene>
    <name evidence="3 6" type="primary">arsH</name>
    <name evidence="5" type="ordered locus">S2709</name>
    <name evidence="6" type="ORF">SF2457T_0606</name>
</gene>
<feature type="chain" id="PRO_0000432221" description="NADPH-dependent FMN reductase ArsH">
    <location>
        <begin position="1"/>
        <end position="255"/>
    </location>
</feature>
<feature type="binding site" evidence="1">
    <location>
        <begin position="43"/>
        <end position="50"/>
    </location>
    <ligand>
        <name>FMN</name>
        <dbReference type="ChEBI" id="CHEBI:58210"/>
    </ligand>
</feature>
<feature type="turn" evidence="9">
    <location>
        <begin position="17"/>
        <end position="19"/>
    </location>
</feature>
<feature type="turn" evidence="9">
    <location>
        <begin position="24"/>
        <end position="28"/>
    </location>
</feature>
<feature type="strand" evidence="9">
    <location>
        <begin position="36"/>
        <end position="42"/>
    </location>
</feature>
<feature type="strand" evidence="9">
    <location>
        <begin position="45"/>
        <end position="47"/>
    </location>
</feature>
<feature type="helix" evidence="9">
    <location>
        <begin position="49"/>
        <end position="63"/>
    </location>
</feature>
<feature type="strand" evidence="9">
    <location>
        <begin position="67"/>
        <end position="71"/>
    </location>
</feature>
<feature type="turn" evidence="9">
    <location>
        <begin position="79"/>
        <end position="81"/>
    </location>
</feature>
<feature type="helix" evidence="9">
    <location>
        <begin position="83"/>
        <end position="85"/>
    </location>
</feature>
<feature type="helix" evidence="9">
    <location>
        <begin position="88"/>
        <end position="99"/>
    </location>
</feature>
<feature type="strand" evidence="9">
    <location>
        <begin position="101"/>
        <end position="110"/>
    </location>
</feature>
<feature type="helix" evidence="9">
    <location>
        <begin position="116"/>
        <end position="124"/>
    </location>
</feature>
<feature type="strand" evidence="9">
    <location>
        <begin position="139"/>
        <end position="145"/>
    </location>
</feature>
<feature type="strand" evidence="9">
    <location>
        <begin position="147"/>
        <end position="149"/>
    </location>
</feature>
<feature type="helix" evidence="9">
    <location>
        <begin position="153"/>
        <end position="164"/>
    </location>
</feature>
<feature type="strand" evidence="9">
    <location>
        <begin position="174"/>
        <end position="176"/>
    </location>
</feature>
<feature type="helix" evidence="9">
    <location>
        <begin position="179"/>
        <end position="181"/>
    </location>
</feature>
<feature type="helix" evidence="9">
    <location>
        <begin position="193"/>
        <end position="212"/>
    </location>
</feature>
<feature type="helix" evidence="9">
    <location>
        <begin position="213"/>
        <end position="215"/>
    </location>
</feature>
<feature type="helix" evidence="9">
    <location>
        <begin position="216"/>
        <end position="219"/>
    </location>
</feature>
<feature type="helix" evidence="9">
    <location>
        <begin position="223"/>
        <end position="229"/>
    </location>
</feature>
<feature type="helix" evidence="9">
    <location>
        <begin position="235"/>
        <end position="238"/>
    </location>
</feature>
<sequence length="255" mass="28400">MRLRHLSDPDSLPALDKSFAIERPALGLAPDAPPVRILLLYGSLRARSFSRLAVEEAARLLQFFGAETRIFDPSDLPLPDQVQSDDHPAVKELRALSEWSEGQVWCSPERHGQITSVMKAQIDHLPLEMAGIRPTQGRTLAVMQVSGGSQSFNAVNTLRLLGRWMRMFTIPNQSSIAKAFQEFDAAGRMKPSPYYDRIADVMEELVRFTALVRPHREALTDRYSERKAAGHVIDEATDLSSIAIAPQPLPESETS</sequence>
<accession>Q7UC03</accession>
<accession>E3XY12</accession>
<comment type="function">
    <text evidence="2">Has NADPH-dependent FMN reductase activity and very low azoreductase activity. No activity with NADH.</text>
</comment>
<comment type="cofactor">
    <cofactor evidence="2">
        <name>FMN</name>
        <dbReference type="ChEBI" id="CHEBI:58210"/>
    </cofactor>
</comment>
<comment type="subunit">
    <text evidence="2">Homotetramer.</text>
</comment>
<comment type="similarity">
    <text evidence="4">Belongs to the ArsH family.</text>
</comment>
<comment type="sequence caution" evidence="4">
    <conflict type="erroneous initiation">
        <sequence resource="EMBL-CDS" id="EFS15380"/>
    </conflict>
    <text>Truncated N-terminus.</text>
</comment>
<reference key="1">
    <citation type="journal article" date="2003" name="Infect. Immun.">
        <title>Complete genome sequence and comparative genomics of Shigella flexneri serotype 2a strain 2457T.</title>
        <authorList>
            <person name="Wei J."/>
            <person name="Goldberg M.B."/>
            <person name="Burland V."/>
            <person name="Venkatesan M.M."/>
            <person name="Deng W."/>
            <person name="Fournier G."/>
            <person name="Mayhew G.F."/>
            <person name="Plunkett G. III"/>
            <person name="Rose D.J."/>
            <person name="Darling A."/>
            <person name="Mau B."/>
            <person name="Perna N.T."/>
            <person name="Payne S.M."/>
            <person name="Runyen-Janecky L.J."/>
            <person name="Zhou S."/>
            <person name="Schwartz D.C."/>
            <person name="Blattner F.R."/>
        </authorList>
    </citation>
    <scope>NUCLEOTIDE SEQUENCE [LARGE SCALE GENOMIC DNA]</scope>
    <source>
        <strain evidence="7">ATCC 700930 / 2457T / Serotype 2a</strain>
    </source>
</reference>
<reference key="2">
    <citation type="submission" date="2010-11" db="EMBL/GenBank/DDBJ databases">
        <authorList>
            <person name="Rasko D."/>
            <person name="Redman J."/>
            <person name="Daugherty S.C."/>
            <person name="Tallon L."/>
            <person name="Sadzewicz L."/>
            <person name="Jones K."/>
            <person name="Santana-Cruz I."/>
            <person name="Liu X."/>
        </authorList>
    </citation>
    <scope>NUCLEOTIDE SEQUENCE [LARGE SCALE GENOMIC DNA]</scope>
    <source>
        <strain evidence="6">ATCC 700930 / 2457T / Serotype 2a</strain>
    </source>
</reference>
<reference evidence="8" key="3">
    <citation type="journal article" date="2007" name="Protein Sci.">
        <title>Crystal structure of an apo form of Shigella flexneri ArsH protein with an NADPH-dependent FMN reductase activity.</title>
        <authorList>
            <person name="Vorontsov I.I."/>
            <person name="Minasov G."/>
            <person name="Brunzelle J.S."/>
            <person name="Shuvalova L."/>
            <person name="Kiryukhina O."/>
            <person name="Collart F.R."/>
            <person name="Anderson W.F."/>
        </authorList>
    </citation>
    <scope>X-RAY CRYSTALLOGRAPHY (1.70 ANGSTROMS) OF APO FORM</scope>
    <scope>FUNCTION</scope>
    <scope>CATALYTIC ACTIVITY</scope>
    <scope>COFACTOR</scope>
    <scope>SUBUNIT</scope>
    <source>
        <strain evidence="3">ATCC 700930 / 2457T / Serotype 2a</strain>
    </source>
</reference>
<organism>
    <name type="scientific">Shigella flexneri</name>
    <dbReference type="NCBI Taxonomy" id="623"/>
    <lineage>
        <taxon>Bacteria</taxon>
        <taxon>Pseudomonadati</taxon>
        <taxon>Pseudomonadota</taxon>
        <taxon>Gammaproteobacteria</taxon>
        <taxon>Enterobacterales</taxon>
        <taxon>Enterobacteriaceae</taxon>
        <taxon>Shigella</taxon>
    </lineage>
</organism>
<protein>
    <recommendedName>
        <fullName evidence="4">NADPH-dependent FMN reductase ArsH</fullName>
        <ecNumber evidence="2">1.-.-.-</ecNumber>
    </recommendedName>
    <alternativeName>
        <fullName evidence="4 5 6">Arsenical resistance operon protein ArsH</fullName>
    </alternativeName>
</protein>
<evidence type="ECO:0000250" key="1">
    <source>
        <dbReference type="UniProtKB" id="Q9I4D4"/>
    </source>
</evidence>
<evidence type="ECO:0000269" key="2">
    <source>
    </source>
</evidence>
<evidence type="ECO:0000303" key="3">
    <source>
    </source>
</evidence>
<evidence type="ECO:0000305" key="4"/>
<evidence type="ECO:0000312" key="5">
    <source>
        <dbReference type="EMBL" id="AAP17869.1"/>
    </source>
</evidence>
<evidence type="ECO:0000312" key="6">
    <source>
        <dbReference type="EMBL" id="EFS15380.1"/>
    </source>
</evidence>
<evidence type="ECO:0000312" key="7">
    <source>
        <dbReference type="Proteomes" id="UP000002673"/>
    </source>
</evidence>
<evidence type="ECO:0007744" key="8">
    <source>
        <dbReference type="PDB" id="2FZV"/>
    </source>
</evidence>
<evidence type="ECO:0007829" key="9">
    <source>
        <dbReference type="PDB" id="2FZV"/>
    </source>
</evidence>